<feature type="chain" id="PRO_0000324163" description="60 kDa lysophospholipase">
    <location>
        <begin position="1"/>
        <end position="573"/>
    </location>
</feature>
<feature type="domain" description="Asparaginase/glutaminase" evidence="3">
    <location>
        <begin position="9"/>
        <end position="355"/>
    </location>
</feature>
<feature type="repeat" description="ANK 1">
    <location>
        <begin position="141"/>
        <end position="170"/>
    </location>
</feature>
<feature type="repeat" description="ANK 2">
    <location>
        <begin position="399"/>
        <end position="429"/>
    </location>
</feature>
<feature type="repeat" description="ANK 3">
    <location>
        <begin position="433"/>
        <end position="462"/>
    </location>
</feature>
<feature type="repeat" description="ANK 4">
    <location>
        <begin position="466"/>
        <end position="495"/>
    </location>
</feature>
<feature type="repeat" description="ANK 5">
    <location>
        <begin position="533"/>
        <end position="562"/>
    </location>
</feature>
<feature type="region of interest" description="Asparaginase">
    <location>
        <begin position="41"/>
        <end position="350"/>
    </location>
</feature>
<feature type="active site" description="Acyl-ester intermediate" evidence="4">
    <location>
        <position position="19"/>
    </location>
</feature>
<feature type="binding site" evidence="1">
    <location>
        <begin position="84"/>
        <end position="86"/>
    </location>
    <ligand>
        <name>substrate</name>
    </ligand>
</feature>
<feature type="binding site" evidence="1">
    <location>
        <begin position="116"/>
        <end position="117"/>
    </location>
    <ligand>
        <name>substrate</name>
    </ligand>
</feature>
<feature type="splice variant" id="VSP_040740" description="In isoform 3." evidence="6">
    <original>E</original>
    <variation>EPSCFQE</variation>
    <location>
        <position position="568"/>
    </location>
</feature>
<feature type="sequence variant" id="VAR_059131" description="In dbSNP:rs1770984.">
    <original>C</original>
    <variation>R</variation>
    <location>
        <position position="95"/>
    </location>
</feature>
<feature type="sequence variant" id="VAR_059132" description="In dbSNP:rs1744284.">
    <original>L</original>
    <variation>V</variation>
    <location>
        <position position="96"/>
    </location>
</feature>
<feature type="sequence variant" id="VAR_059133" description="In dbSNP:rs8012505." evidence="5">
    <original>S</original>
    <variation>R</variation>
    <location>
        <position position="344"/>
    </location>
</feature>
<name>LPP60_HUMAN</name>
<comment type="function">
    <text evidence="2">Exhibits lysophospholipase, transacylase, PAF acetylhydrolase and asparaginase activities (By similarity). Can catalyze three types of transacylation reactions: (1) acyl transfer from 1-acyl-sn-glycero-3-phosphocholine (1-acyl-GPC) to the sn-1(3) positions of glycerol and 2-acylglycerol (sn-1 to -1(3) transfer), (2) acyl transfer from 1-acyl-GPC to the sn-2 positions of 1-acyl-GPC, 1-acyl-sn-glycero-3-phosphoethanolamine (1-acyl-GPE), and other lysophospholipids (sn-1 to -2 transfer) and (3) acyl transfer from 2-acyl-GPC to the sn-1 position of 2-acyl-GPC and 2-acyl-GPE (sn-2 to -1 transfer) (By similarity). Mediates the synthesis of 1-arachidonoyl species of phospholipids by transferring the arachidonoyl residue from 2-arachidonoyl lysophospholipid to the sn-1 position of 2-acyl lysophospholipid (By similarity).</text>
</comment>
<comment type="catalytic activity">
    <reaction evidence="2">
        <text>a 1-acyl-sn-glycero-3-phosphocholine + H2O = sn-glycerol 3-phosphocholine + a fatty acid + H(+)</text>
        <dbReference type="Rhea" id="RHEA:15177"/>
        <dbReference type="ChEBI" id="CHEBI:15377"/>
        <dbReference type="ChEBI" id="CHEBI:15378"/>
        <dbReference type="ChEBI" id="CHEBI:16870"/>
        <dbReference type="ChEBI" id="CHEBI:28868"/>
        <dbReference type="ChEBI" id="CHEBI:58168"/>
        <dbReference type="EC" id="3.1.1.5"/>
    </reaction>
    <physiologicalReaction direction="left-to-right" evidence="2">
        <dbReference type="Rhea" id="RHEA:15178"/>
    </physiologicalReaction>
</comment>
<comment type="catalytic activity">
    <reaction evidence="2">
        <text>L-asparagine + H2O = L-aspartate + NH4(+)</text>
        <dbReference type="Rhea" id="RHEA:21016"/>
        <dbReference type="ChEBI" id="CHEBI:15377"/>
        <dbReference type="ChEBI" id="CHEBI:28938"/>
        <dbReference type="ChEBI" id="CHEBI:29991"/>
        <dbReference type="ChEBI" id="CHEBI:58048"/>
        <dbReference type="EC" id="3.5.1.1"/>
    </reaction>
    <physiologicalReaction direction="left-to-right" evidence="2">
        <dbReference type="Rhea" id="RHEA:21017"/>
    </physiologicalReaction>
</comment>
<comment type="catalytic activity">
    <reaction evidence="2">
        <text>a 1-O-alkyl-2-acetyl-sn-glycero-3-phosphocholine + H2O = a 1-O-alkyl-sn-glycero-3-phosphocholine + acetate + H(+)</text>
        <dbReference type="Rhea" id="RHEA:17777"/>
        <dbReference type="ChEBI" id="CHEBI:15377"/>
        <dbReference type="ChEBI" id="CHEBI:15378"/>
        <dbReference type="ChEBI" id="CHEBI:30089"/>
        <dbReference type="ChEBI" id="CHEBI:30909"/>
        <dbReference type="ChEBI" id="CHEBI:36707"/>
        <dbReference type="EC" id="3.1.1.47"/>
    </reaction>
    <physiologicalReaction direction="left-to-right" evidence="2">
        <dbReference type="Rhea" id="RHEA:17778"/>
    </physiologicalReaction>
</comment>
<comment type="catalytic activity">
    <reaction evidence="2">
        <text>1-hexadecanoyl-sn-glycero-3-phosphocholine + H2O = sn-glycerol 3-phosphocholine + hexadecanoate + H(+)</text>
        <dbReference type="Rhea" id="RHEA:40435"/>
        <dbReference type="ChEBI" id="CHEBI:7896"/>
        <dbReference type="ChEBI" id="CHEBI:15377"/>
        <dbReference type="ChEBI" id="CHEBI:15378"/>
        <dbReference type="ChEBI" id="CHEBI:16870"/>
        <dbReference type="ChEBI" id="CHEBI:72998"/>
    </reaction>
    <physiologicalReaction direction="left-to-right" evidence="2">
        <dbReference type="Rhea" id="RHEA:40436"/>
    </physiologicalReaction>
</comment>
<comment type="catalytic activity">
    <reaction evidence="2">
        <text>2 1-hexadecanoyl-sn-glycero-3-phosphocholine = 1,2-dihexadecanoyl-sn-glycero-3-phosphocholine + sn-glycerol 3-phosphocholine</text>
        <dbReference type="Rhea" id="RHEA:40879"/>
        <dbReference type="ChEBI" id="CHEBI:16870"/>
        <dbReference type="ChEBI" id="CHEBI:72998"/>
        <dbReference type="ChEBI" id="CHEBI:72999"/>
    </reaction>
    <physiologicalReaction direction="left-to-right" evidence="2">
        <dbReference type="Rhea" id="RHEA:40880"/>
    </physiologicalReaction>
</comment>
<comment type="catalytic activity">
    <reaction evidence="2">
        <text>1-octadecanoyl-sn-glycero-3-phosphocholine + H2O = octadecanoate + sn-glycerol 3-phosphocholine + H(+)</text>
        <dbReference type="Rhea" id="RHEA:40887"/>
        <dbReference type="ChEBI" id="CHEBI:15377"/>
        <dbReference type="ChEBI" id="CHEBI:15378"/>
        <dbReference type="ChEBI" id="CHEBI:16870"/>
        <dbReference type="ChEBI" id="CHEBI:25629"/>
        <dbReference type="ChEBI" id="CHEBI:73858"/>
    </reaction>
    <physiologicalReaction direction="left-to-right" evidence="2">
        <dbReference type="Rhea" id="RHEA:40888"/>
    </physiologicalReaction>
</comment>
<comment type="catalytic activity">
    <reaction evidence="2">
        <text>1-(9Z-octadecenoyl)-sn-glycero-3-phosphocholine + H2O = sn-glycerol 3-phosphocholine + (9Z)-octadecenoate + H(+)</text>
        <dbReference type="Rhea" id="RHEA:40807"/>
        <dbReference type="ChEBI" id="CHEBI:15377"/>
        <dbReference type="ChEBI" id="CHEBI:15378"/>
        <dbReference type="ChEBI" id="CHEBI:16870"/>
        <dbReference type="ChEBI" id="CHEBI:28610"/>
        <dbReference type="ChEBI" id="CHEBI:30823"/>
    </reaction>
    <physiologicalReaction direction="left-to-right" evidence="2">
        <dbReference type="Rhea" id="RHEA:40808"/>
    </physiologicalReaction>
</comment>
<comment type="catalytic activity">
    <reaction evidence="2">
        <text>1-hexadecanoyl-sn-glycero-3-phosphoethanolamine + H2O = sn-glycero-3-phosphoethanolamine + hexadecanoate + H(+)</text>
        <dbReference type="Rhea" id="RHEA:40891"/>
        <dbReference type="ChEBI" id="CHEBI:7896"/>
        <dbReference type="ChEBI" id="CHEBI:15377"/>
        <dbReference type="ChEBI" id="CHEBI:15378"/>
        <dbReference type="ChEBI" id="CHEBI:73004"/>
        <dbReference type="ChEBI" id="CHEBI:143890"/>
    </reaction>
    <physiologicalReaction direction="left-to-right" evidence="2">
        <dbReference type="Rhea" id="RHEA:40892"/>
    </physiologicalReaction>
</comment>
<comment type="catalytic activity">
    <reaction evidence="2">
        <text>1-(9Z-octadecenoyl)-sn-glycero-3-phosphoethanolamine + H2O = sn-glycero-3-phosphoethanolamine + (9Z)-octadecenoate + H(+)</text>
        <dbReference type="Rhea" id="RHEA:40895"/>
        <dbReference type="ChEBI" id="CHEBI:15377"/>
        <dbReference type="ChEBI" id="CHEBI:15378"/>
        <dbReference type="ChEBI" id="CHEBI:30823"/>
        <dbReference type="ChEBI" id="CHEBI:74971"/>
        <dbReference type="ChEBI" id="CHEBI:143890"/>
    </reaction>
    <physiologicalReaction direction="left-to-right" evidence="2">
        <dbReference type="Rhea" id="RHEA:40896"/>
    </physiologicalReaction>
</comment>
<comment type="catalytic activity">
    <reaction evidence="2">
        <text>1-hexadecanoyl-sn-glycero-3-phosphoethanolamine + 1-hexadecanoyl-sn-glycero-3-phosphocholine = 1,2-dihexadecanoyl-sn-glycero-3-phosphoethanolamine + sn-glycerol 3-phosphocholine</text>
        <dbReference type="Rhea" id="RHEA:40899"/>
        <dbReference type="ChEBI" id="CHEBI:16870"/>
        <dbReference type="ChEBI" id="CHEBI:72998"/>
        <dbReference type="ChEBI" id="CHEBI:73004"/>
        <dbReference type="ChEBI" id="CHEBI:73005"/>
    </reaction>
    <physiologicalReaction direction="left-to-right" evidence="2">
        <dbReference type="Rhea" id="RHEA:40900"/>
    </physiologicalReaction>
</comment>
<comment type="catalytic activity">
    <reaction evidence="2">
        <text>2-(5Z,8Z,11Z,14Z)-eicosatetraenoyl-sn-glycero-3-phosphocholine + H2O = sn-glycerol 3-phosphocholine + (5Z,8Z,11Z,14Z)-eicosatetraenoate + H(+)</text>
        <dbReference type="Rhea" id="RHEA:40827"/>
        <dbReference type="ChEBI" id="CHEBI:15377"/>
        <dbReference type="ChEBI" id="CHEBI:15378"/>
        <dbReference type="ChEBI" id="CHEBI:16870"/>
        <dbReference type="ChEBI" id="CHEBI:32395"/>
        <dbReference type="ChEBI" id="CHEBI:76079"/>
    </reaction>
    <physiologicalReaction direction="left-to-right" evidence="2">
        <dbReference type="Rhea" id="RHEA:40828"/>
    </physiologicalReaction>
</comment>
<comment type="catalytic activity">
    <reaction evidence="2">
        <text>2-hexadecanoyl-sn-glycero-3-phosphocholine + H2O = sn-glycerol 3-phosphocholine + hexadecanoate + H(+)</text>
        <dbReference type="Rhea" id="RHEA:40903"/>
        <dbReference type="ChEBI" id="CHEBI:7896"/>
        <dbReference type="ChEBI" id="CHEBI:15377"/>
        <dbReference type="ChEBI" id="CHEBI:15378"/>
        <dbReference type="ChEBI" id="CHEBI:16870"/>
        <dbReference type="ChEBI" id="CHEBI:76078"/>
    </reaction>
    <physiologicalReaction direction="left-to-right" evidence="2">
        <dbReference type="Rhea" id="RHEA:40904"/>
    </physiologicalReaction>
</comment>
<comment type="catalytic activity">
    <reaction evidence="2">
        <text>2 2-hexadecanoyl-sn-glycero-3-phosphocholine = 1,2-dihexadecanoyl-sn-glycero-3-phosphocholine + sn-glycerol 3-phosphocholine</text>
        <dbReference type="Rhea" id="RHEA:40907"/>
        <dbReference type="ChEBI" id="CHEBI:16870"/>
        <dbReference type="ChEBI" id="CHEBI:72999"/>
        <dbReference type="ChEBI" id="CHEBI:76078"/>
    </reaction>
    <physiologicalReaction direction="left-to-right" evidence="2">
        <dbReference type="Rhea" id="RHEA:40908"/>
    </physiologicalReaction>
</comment>
<comment type="catalytic activity">
    <reaction evidence="2">
        <text>1-O-(9Z)-octadecenoyl-2-O-acetyl-sn-glycero-3-phosphocholine + H2O = 2-acetyl-sn-glycero-3-phosphocholine + (9Z)-octadecenoate + H(+)</text>
        <dbReference type="Rhea" id="RHEA:41320"/>
        <dbReference type="ChEBI" id="CHEBI:15377"/>
        <dbReference type="ChEBI" id="CHEBI:15378"/>
        <dbReference type="ChEBI" id="CHEBI:30823"/>
        <dbReference type="ChEBI" id="CHEBI:78044"/>
        <dbReference type="ChEBI" id="CHEBI:78045"/>
    </reaction>
    <physiologicalReaction direction="left-to-right" evidence="2">
        <dbReference type="Rhea" id="RHEA:41321"/>
    </physiologicalReaction>
</comment>
<comment type="catalytic activity">
    <reaction evidence="2">
        <text>a 1-acyl-sn-glycero-3-phospho-(1D-myo-inositol) + 1-hexadecanoyl-sn-glycero-3-phosphocholine = a 1-acyl-2-hexadecanoyl-sn-glycero-3-phospho-(1D-myo-inositol) + sn-glycerol 3-phosphocholine</text>
        <dbReference type="Rhea" id="RHEA:41352"/>
        <dbReference type="ChEBI" id="CHEBI:16870"/>
        <dbReference type="ChEBI" id="CHEBI:64771"/>
        <dbReference type="ChEBI" id="CHEBI:64874"/>
        <dbReference type="ChEBI" id="CHEBI:72998"/>
    </reaction>
    <physiologicalReaction direction="left-to-right" evidence="2">
        <dbReference type="Rhea" id="RHEA:41353"/>
    </physiologicalReaction>
</comment>
<comment type="catalytic activity">
    <reaction evidence="2">
        <text>2 2-(5Z,8Z,11Z,14Z)-eicosatetraenoyl-sn-glycero-3-phosphocholine = 1,2-di-(5Z,8Z,11Z,14Z-eicosatetraenoyl)-sn-glycero-3-phosphocholine + sn-glycerol 3-phosphocholine</text>
        <dbReference type="Rhea" id="RHEA:40959"/>
        <dbReference type="ChEBI" id="CHEBI:16870"/>
        <dbReference type="ChEBI" id="CHEBI:60657"/>
        <dbReference type="ChEBI" id="CHEBI:76079"/>
    </reaction>
    <physiologicalReaction direction="left-to-right" evidence="2">
        <dbReference type="Rhea" id="RHEA:40960"/>
    </physiologicalReaction>
</comment>
<comment type="subunit">
    <text evidence="2">Monomer.</text>
</comment>
<comment type="interaction">
    <interactant intactId="EBI-19946665">
        <id>Q86U10</id>
    </interactant>
    <interactant intactId="EBI-4314501">
        <id>P40199</id>
        <label>CEACAM6</label>
    </interactant>
    <organismsDiffer>false</organismsDiffer>
    <experiments>3</experiments>
</comment>
<comment type="interaction">
    <interactant intactId="EBI-19946665">
        <id>Q86U10</id>
    </interactant>
    <interactant intactId="EBI-12155483">
        <id>Q9H1P6</id>
        <label>CIMIP1</label>
    </interactant>
    <organismsDiffer>false</organismsDiffer>
    <experiments>3</experiments>
</comment>
<comment type="interaction">
    <interactant intactId="EBI-19946665">
        <id>Q86U10</id>
    </interactant>
    <interactant intactId="EBI-9679045">
        <id>Q9NQL9</id>
        <label>DMRT3</label>
    </interactant>
    <organismsDiffer>false</organismsDiffer>
    <experiments>3</experiments>
</comment>
<comment type="interaction">
    <interactant intactId="EBI-19946665">
        <id>Q86U10</id>
    </interactant>
    <interactant intactId="EBI-2798865">
        <id>P57764</id>
        <label>GSDMD</label>
    </interactant>
    <organismsDiffer>false</organismsDiffer>
    <experiments>3</experiments>
</comment>
<comment type="interaction">
    <interactant intactId="EBI-19946665">
        <id>Q86U10</id>
    </interactant>
    <interactant intactId="EBI-5662487">
        <id>Q8TDC0</id>
        <label>MYOZ3</label>
    </interactant>
    <organismsDiffer>false</organismsDiffer>
    <experiments>3</experiments>
</comment>
<comment type="interaction">
    <interactant intactId="EBI-19946665">
        <id>Q86U10</id>
    </interactant>
    <interactant intactId="EBI-10217913">
        <id>Q14D33</id>
        <label>RTP5</label>
    </interactant>
    <organismsDiffer>false</organismsDiffer>
    <experiments>3</experiments>
</comment>
<comment type="interaction">
    <interactant intactId="EBI-19946665">
        <id>Q86U10</id>
    </interactant>
    <interactant intactId="EBI-79084">
        <id>Q92529</id>
        <label>SHC3</label>
    </interactant>
    <organismsDiffer>false</organismsDiffer>
    <experiments>3</experiments>
</comment>
<comment type="interaction">
    <interactant intactId="EBI-19946665">
        <id>Q86U10</id>
    </interactant>
    <interactant intactId="EBI-8644516">
        <id>Q9BXF9</id>
        <label>TEKT3</label>
    </interactant>
    <organismsDiffer>false</organismsDiffer>
    <experiments>3</experiments>
</comment>
<comment type="interaction">
    <interactant intactId="EBI-19946665">
        <id>Q86U10</id>
    </interactant>
    <interactant intactId="EBI-8633987">
        <id>Q12893</id>
        <label>TMEM115</label>
    </interactant>
    <organismsDiffer>false</organismsDiffer>
    <experiments>3</experiments>
</comment>
<comment type="interaction">
    <interactant intactId="EBI-19946665">
        <id>Q86U10</id>
    </interactant>
    <interactant intactId="EBI-743272">
        <id>O75604</id>
        <label>USP2</label>
    </interactant>
    <organismsDiffer>false</organismsDiffer>
    <experiments>3</experiments>
</comment>
<comment type="interaction">
    <interactant intactId="EBI-19946665">
        <id>Q86U10</id>
    </interactant>
    <interactant intactId="EBI-741945">
        <id>Q9BRG1</id>
        <label>VPS25</label>
    </interactant>
    <organismsDiffer>false</organismsDiffer>
    <experiments>5</experiments>
</comment>
<comment type="alternative products">
    <event type="alternative splicing"/>
    <isoform>
        <id>Q86U10-1</id>
        <name>1</name>
        <sequence type="displayed"/>
    </isoform>
    <isoform>
        <id>Q86U10-3</id>
        <name>3</name>
        <sequence type="described" ref="VSP_040740"/>
    </isoform>
</comment>
<comment type="miscellaneous">
    <molecule>Isoform 3</molecule>
    <text evidence="7">May be due to a competing acceptor splice site.</text>
</comment>
<comment type="similarity">
    <text evidence="7">In the N-terminal section; belongs to the asparaginase 1 family.</text>
</comment>
<comment type="sequence caution" evidence="7">
    <conflict type="erroneous translation">
        <sequence resource="EMBL-CDS" id="CAD62331"/>
    </conflict>
    <text>Wrong choice of frame.</text>
</comment>
<sequence>MARAVGPERRLLAVYTGGTIGMRSELGVLVPGTGLAAILRTLPMFHDEEHARARGLSEDTLVLPPASRNQRILYTVLECQPLFDSSDMTIAEWVCLAQTIKRHYEQYHGFVVIHGTDTMAFAASMLSFMLENLQKTVILTGAQVPIHALWSDGRENLLGALLMAGQYVIPEVCLFFQNQLFRGNRATKVDARRFAAFCSPNLLPLATVGADITINRELVRKVDGKAGLVVHSSMEQDVGLLRLYPGIPAALVRAFLQPPLKGVVMETFGSGNGPTKPDLLQELRVATERGLVIVNCTHCLQGAVTTDYAAGMAMAGAGVISGFDMTSEAALAKLSYVLGQPGLSLDVRKELLTKDLRGEMTPPSVEERRPSLQGNTLGGGVSWLLSLSGSQEADALRNALVPSLACAAAHAGDVEALQALVELGSDLGLVDFNGQTPLHAAARGGHTEAVTMLLQRGVDVNTRDTDGFSPLLLAVRGRHPGVIGLLREAGASLSTQELEEAGTELCRLAYRADLEGLQVWWQAGADLGQPGYDGHSALHVAEAAGNLAVVAFLQSLEGAVGAQAPCPEVLPGV</sequence>
<dbReference type="EC" id="3.1.1.5" evidence="2"/>
<dbReference type="EC" id="3.5.1.1" evidence="2"/>
<dbReference type="EC" id="3.1.1.47" evidence="2"/>
<dbReference type="EMBL" id="AL136001">
    <property type="status" value="NOT_ANNOTATED_CDS"/>
    <property type="molecule type" value="Genomic_DNA"/>
</dbReference>
<dbReference type="EMBL" id="CH471061">
    <property type="protein sequence ID" value="EAW81858.1"/>
    <property type="molecule type" value="Genomic_DNA"/>
</dbReference>
<dbReference type="EMBL" id="CH471061">
    <property type="protein sequence ID" value="EAW81859.1"/>
    <property type="molecule type" value="Genomic_DNA"/>
</dbReference>
<dbReference type="EMBL" id="BC035836">
    <property type="protein sequence ID" value="AAH35836.1"/>
    <property type="molecule type" value="mRNA"/>
</dbReference>
<dbReference type="EMBL" id="BC136637">
    <property type="protein sequence ID" value="AAI36638.1"/>
    <property type="molecule type" value="mRNA"/>
</dbReference>
<dbReference type="EMBL" id="BX247999">
    <property type="protein sequence ID" value="CAD62331.1"/>
    <property type="status" value="ALT_SEQ"/>
    <property type="molecule type" value="mRNA"/>
</dbReference>
<dbReference type="EMBL" id="AI373537">
    <property type="status" value="NOT_ANNOTATED_CDS"/>
    <property type="molecule type" value="mRNA"/>
</dbReference>
<dbReference type="CCDS" id="CCDS45170.2">
    <molecule id="Q86U10-1"/>
</dbReference>
<dbReference type="RefSeq" id="NP_001073933.2">
    <molecule id="Q86U10-1"/>
    <property type="nucleotide sequence ID" value="NM_001080464.3"/>
</dbReference>
<dbReference type="RefSeq" id="XP_005267647.1">
    <molecule id="Q86U10-3"/>
    <property type="nucleotide sequence ID" value="XM_005267590.5"/>
</dbReference>
<dbReference type="SMR" id="Q86U10"/>
<dbReference type="BioGRID" id="131909">
    <property type="interactions" value="13"/>
</dbReference>
<dbReference type="FunCoup" id="Q86U10">
    <property type="interactions" value="283"/>
</dbReference>
<dbReference type="IntAct" id="Q86U10">
    <property type="interactions" value="11"/>
</dbReference>
<dbReference type="STRING" id="9606.ENSP00000450040"/>
<dbReference type="DrugBank" id="DB00721">
    <property type="generic name" value="Procaine"/>
</dbReference>
<dbReference type="GlyGen" id="Q86U10">
    <property type="glycosylation" value="1 site"/>
</dbReference>
<dbReference type="PhosphoSitePlus" id="Q86U10"/>
<dbReference type="BioMuta" id="ASPG"/>
<dbReference type="DMDM" id="317373428"/>
<dbReference type="MassIVE" id="Q86U10"/>
<dbReference type="PaxDb" id="9606-ENSP00000450040"/>
<dbReference type="PeptideAtlas" id="Q86U10"/>
<dbReference type="ProteomicsDB" id="69756">
    <molecule id="Q86U10-1"/>
</dbReference>
<dbReference type="ProteomicsDB" id="69757">
    <molecule id="Q86U10-3"/>
</dbReference>
<dbReference type="Antibodypedia" id="59083">
    <property type="antibodies" value="58 antibodies from 13 providers"/>
</dbReference>
<dbReference type="DNASU" id="374569"/>
<dbReference type="Ensembl" id="ENST00000551177.6">
    <molecule id="Q86U10-1"/>
    <property type="protein sequence ID" value="ENSP00000450040.1"/>
    <property type="gene ID" value="ENSG00000166183.16"/>
</dbReference>
<dbReference type="GeneID" id="374569"/>
<dbReference type="KEGG" id="hsa:374569"/>
<dbReference type="MANE-Select" id="ENST00000551177.6">
    <property type="protein sequence ID" value="ENSP00000450040.1"/>
    <property type="RefSeq nucleotide sequence ID" value="NM_001080464.3"/>
    <property type="RefSeq protein sequence ID" value="NP_001073933.2"/>
</dbReference>
<dbReference type="UCSC" id="uc001yoq.3">
    <molecule id="Q86U10-1"/>
    <property type="organism name" value="human"/>
</dbReference>
<dbReference type="AGR" id="HGNC:20123"/>
<dbReference type="CTD" id="374569"/>
<dbReference type="DisGeNET" id="374569"/>
<dbReference type="GeneCards" id="ASPG"/>
<dbReference type="HGNC" id="HGNC:20123">
    <property type="gene designation" value="ASPG"/>
</dbReference>
<dbReference type="HPA" id="ENSG00000166183">
    <property type="expression patterns" value="Tissue enhanced (heart muscle, liver)"/>
</dbReference>
<dbReference type="MIM" id="618472">
    <property type="type" value="gene"/>
</dbReference>
<dbReference type="neXtProt" id="NX_Q86U10"/>
<dbReference type="OpenTargets" id="ENSG00000166183"/>
<dbReference type="VEuPathDB" id="HostDB:ENSG00000166183"/>
<dbReference type="eggNOG" id="KOG0503">
    <property type="taxonomic scope" value="Eukaryota"/>
</dbReference>
<dbReference type="GeneTree" id="ENSGT00390000001610"/>
<dbReference type="HOGENOM" id="CLU_019134_3_0_1"/>
<dbReference type="InParanoid" id="Q86U10"/>
<dbReference type="OMA" id="EWDLANK"/>
<dbReference type="OrthoDB" id="542841at2759"/>
<dbReference type="PAN-GO" id="Q86U10">
    <property type="GO annotations" value="1 GO annotation based on evolutionary models"/>
</dbReference>
<dbReference type="PhylomeDB" id="Q86U10"/>
<dbReference type="TreeFam" id="TF315247"/>
<dbReference type="BioCyc" id="MetaCyc:HS15413-MONOMER"/>
<dbReference type="PathwayCommons" id="Q86U10"/>
<dbReference type="Reactome" id="R-HSA-8963693">
    <property type="pathway name" value="Aspartate and asparagine metabolism"/>
</dbReference>
<dbReference type="SignaLink" id="Q86U10"/>
<dbReference type="SIGNOR" id="Q86U10"/>
<dbReference type="BioGRID-ORCS" id="374569">
    <property type="hits" value="11 hits in 1135 CRISPR screens"/>
</dbReference>
<dbReference type="GenomeRNAi" id="374569"/>
<dbReference type="Pharos" id="Q86U10">
    <property type="development level" value="Tbio"/>
</dbReference>
<dbReference type="PRO" id="PR:Q86U10"/>
<dbReference type="Proteomes" id="UP000005640">
    <property type="component" value="Chromosome 14"/>
</dbReference>
<dbReference type="RNAct" id="Q86U10">
    <property type="molecule type" value="protein"/>
</dbReference>
<dbReference type="Bgee" id="ENSG00000166183">
    <property type="expression patterns" value="Expressed in right lobe of liver and 99 other cell types or tissues"/>
</dbReference>
<dbReference type="ExpressionAtlas" id="Q86U10">
    <property type="expression patterns" value="baseline and differential"/>
</dbReference>
<dbReference type="GO" id="GO:0005829">
    <property type="term" value="C:cytosol"/>
    <property type="evidence" value="ECO:0000304"/>
    <property type="project" value="Reactome"/>
</dbReference>
<dbReference type="GO" id="GO:0003847">
    <property type="term" value="F:1-alkyl-2-acetylglycerophosphocholine esterase activity"/>
    <property type="evidence" value="ECO:0007669"/>
    <property type="project" value="UniProtKB-EC"/>
</dbReference>
<dbReference type="GO" id="GO:0016747">
    <property type="term" value="F:acyltransferase activity, transferring groups other than amino-acyl groups"/>
    <property type="evidence" value="ECO:0000250"/>
    <property type="project" value="UniProtKB"/>
</dbReference>
<dbReference type="GO" id="GO:0004067">
    <property type="term" value="F:asparaginase activity"/>
    <property type="evidence" value="ECO:0000318"/>
    <property type="project" value="GO_Central"/>
</dbReference>
<dbReference type="GO" id="GO:0004622">
    <property type="term" value="F:lysophospholipase activity"/>
    <property type="evidence" value="ECO:0000250"/>
    <property type="project" value="UniProtKB"/>
</dbReference>
<dbReference type="GO" id="GO:0009066">
    <property type="term" value="P:aspartate family amino acid metabolic process"/>
    <property type="evidence" value="ECO:0000304"/>
    <property type="project" value="Reactome"/>
</dbReference>
<dbReference type="GO" id="GO:0016042">
    <property type="term" value="P:lipid catabolic process"/>
    <property type="evidence" value="ECO:0007669"/>
    <property type="project" value="UniProtKB-KW"/>
</dbReference>
<dbReference type="CDD" id="cd08963">
    <property type="entry name" value="L-asparaginase_I"/>
    <property type="match status" value="1"/>
</dbReference>
<dbReference type="FunFam" id="3.40.50.1170:FF:000003">
    <property type="entry name" value="60 kDa lysophospholipase"/>
    <property type="match status" value="1"/>
</dbReference>
<dbReference type="FunFam" id="1.25.40.20:FF:000276">
    <property type="entry name" value="Asparaginase"/>
    <property type="match status" value="1"/>
</dbReference>
<dbReference type="FunFam" id="1.25.40.20:FF:000265">
    <property type="entry name" value="ASPG isoform 1"/>
    <property type="match status" value="1"/>
</dbReference>
<dbReference type="FunFam" id="3.40.50.40:FF:000001">
    <property type="entry name" value="L-asparaginase 1"/>
    <property type="match status" value="1"/>
</dbReference>
<dbReference type="Gene3D" id="3.40.50.40">
    <property type="match status" value="1"/>
</dbReference>
<dbReference type="Gene3D" id="1.25.40.20">
    <property type="entry name" value="Ankyrin repeat-containing domain"/>
    <property type="match status" value="2"/>
</dbReference>
<dbReference type="Gene3D" id="3.40.50.1170">
    <property type="entry name" value="L-asparaginase, N-terminal domain"/>
    <property type="match status" value="1"/>
</dbReference>
<dbReference type="InterPro" id="IPR002110">
    <property type="entry name" value="Ankyrin_rpt"/>
</dbReference>
<dbReference type="InterPro" id="IPR036770">
    <property type="entry name" value="Ankyrin_rpt-contain_sf"/>
</dbReference>
<dbReference type="InterPro" id="IPR006033">
    <property type="entry name" value="AsnA_fam"/>
</dbReference>
<dbReference type="InterPro" id="IPR036152">
    <property type="entry name" value="Asp/glu_Ase-like_sf"/>
</dbReference>
<dbReference type="InterPro" id="IPR006034">
    <property type="entry name" value="Asparaginase/glutaminase-like"/>
</dbReference>
<dbReference type="InterPro" id="IPR027475">
    <property type="entry name" value="Asparaginase/glutaminase_AS2"/>
</dbReference>
<dbReference type="InterPro" id="IPR040919">
    <property type="entry name" value="Asparaginase_C"/>
</dbReference>
<dbReference type="InterPro" id="IPR027473">
    <property type="entry name" value="L-asparaginase_C"/>
</dbReference>
<dbReference type="InterPro" id="IPR041725">
    <property type="entry name" value="L-asparaginase_I"/>
</dbReference>
<dbReference type="InterPro" id="IPR027474">
    <property type="entry name" value="L-asparaginase_N"/>
</dbReference>
<dbReference type="InterPro" id="IPR037152">
    <property type="entry name" value="L-asparaginase_N_sf"/>
</dbReference>
<dbReference type="NCBIfam" id="TIGR00519">
    <property type="entry name" value="asnASE_I"/>
    <property type="match status" value="1"/>
</dbReference>
<dbReference type="PANTHER" id="PTHR11707:SF28">
    <property type="entry name" value="60 KDA LYSOPHOSPHOLIPASE"/>
    <property type="match status" value="1"/>
</dbReference>
<dbReference type="PANTHER" id="PTHR11707">
    <property type="entry name" value="L-ASPARAGINASE"/>
    <property type="match status" value="1"/>
</dbReference>
<dbReference type="Pfam" id="PF12796">
    <property type="entry name" value="Ank_2"/>
    <property type="match status" value="1"/>
</dbReference>
<dbReference type="Pfam" id="PF00710">
    <property type="entry name" value="Asparaginase"/>
    <property type="match status" value="1"/>
</dbReference>
<dbReference type="Pfam" id="PF17763">
    <property type="entry name" value="Asparaginase_C"/>
    <property type="match status" value="1"/>
</dbReference>
<dbReference type="PIRSF" id="PIRSF001220">
    <property type="entry name" value="L-ASNase_gatD"/>
    <property type="match status" value="1"/>
</dbReference>
<dbReference type="PIRSF" id="PIRSF500176">
    <property type="entry name" value="L_ASNase"/>
    <property type="match status" value="1"/>
</dbReference>
<dbReference type="PRINTS" id="PR01415">
    <property type="entry name" value="ANKYRIN"/>
</dbReference>
<dbReference type="PRINTS" id="PR00139">
    <property type="entry name" value="ASNGLNASE"/>
</dbReference>
<dbReference type="SFLD" id="SFLDS00057">
    <property type="entry name" value="Glutaminase/Asparaginase"/>
    <property type="match status" value="1"/>
</dbReference>
<dbReference type="SMART" id="SM00248">
    <property type="entry name" value="ANK"/>
    <property type="match status" value="4"/>
</dbReference>
<dbReference type="SMART" id="SM00870">
    <property type="entry name" value="Asparaginase"/>
    <property type="match status" value="1"/>
</dbReference>
<dbReference type="SUPFAM" id="SSF48403">
    <property type="entry name" value="Ankyrin repeat"/>
    <property type="match status" value="1"/>
</dbReference>
<dbReference type="SUPFAM" id="SSF53774">
    <property type="entry name" value="Glutaminase/Asparaginase"/>
    <property type="match status" value="1"/>
</dbReference>
<dbReference type="PROSITE" id="PS50297">
    <property type="entry name" value="ANK_REP_REGION"/>
    <property type="match status" value="1"/>
</dbReference>
<dbReference type="PROSITE" id="PS50088">
    <property type="entry name" value="ANK_REPEAT"/>
    <property type="match status" value="2"/>
</dbReference>
<dbReference type="PROSITE" id="PS00917">
    <property type="entry name" value="ASN_GLN_ASE_2"/>
    <property type="match status" value="1"/>
</dbReference>
<dbReference type="PROSITE" id="PS51732">
    <property type="entry name" value="ASN_GLN_ASE_3"/>
    <property type="match status" value="1"/>
</dbReference>
<proteinExistence type="evidence at protein level"/>
<reference key="1">
    <citation type="journal article" date="2003" name="Nature">
        <title>The DNA sequence and analysis of human chromosome 14.</title>
        <authorList>
            <person name="Heilig R."/>
            <person name="Eckenberg R."/>
            <person name="Petit J.-L."/>
            <person name="Fonknechten N."/>
            <person name="Da Silva C."/>
            <person name="Cattolico L."/>
            <person name="Levy M."/>
            <person name="Barbe V."/>
            <person name="De Berardinis V."/>
            <person name="Ureta-Vidal A."/>
            <person name="Pelletier E."/>
            <person name="Vico V."/>
            <person name="Anthouard V."/>
            <person name="Rowen L."/>
            <person name="Madan A."/>
            <person name="Qin S."/>
            <person name="Sun H."/>
            <person name="Du H."/>
            <person name="Pepin K."/>
            <person name="Artiguenave F."/>
            <person name="Robert C."/>
            <person name="Cruaud C."/>
            <person name="Bruels T."/>
            <person name="Jaillon O."/>
            <person name="Friedlander L."/>
            <person name="Samson G."/>
            <person name="Brottier P."/>
            <person name="Cure S."/>
            <person name="Segurens B."/>
            <person name="Aniere F."/>
            <person name="Samain S."/>
            <person name="Crespeau H."/>
            <person name="Abbasi N."/>
            <person name="Aiach N."/>
            <person name="Boscus D."/>
            <person name="Dickhoff R."/>
            <person name="Dors M."/>
            <person name="Dubois I."/>
            <person name="Friedman C."/>
            <person name="Gouyvenoux M."/>
            <person name="James R."/>
            <person name="Madan A."/>
            <person name="Mairey-Estrada B."/>
            <person name="Mangenot S."/>
            <person name="Martins N."/>
            <person name="Menard M."/>
            <person name="Oztas S."/>
            <person name="Ratcliffe A."/>
            <person name="Shaffer T."/>
            <person name="Trask B."/>
            <person name="Vacherie B."/>
            <person name="Bellemere C."/>
            <person name="Belser C."/>
            <person name="Besnard-Gonnet M."/>
            <person name="Bartol-Mavel D."/>
            <person name="Boutard M."/>
            <person name="Briez-Silla S."/>
            <person name="Combette S."/>
            <person name="Dufosse-Laurent V."/>
            <person name="Ferron C."/>
            <person name="Lechaplais C."/>
            <person name="Louesse C."/>
            <person name="Muselet D."/>
            <person name="Magdelenat G."/>
            <person name="Pateau E."/>
            <person name="Petit E."/>
            <person name="Sirvain-Trukniewicz P."/>
            <person name="Trybou A."/>
            <person name="Vega-Czarny N."/>
            <person name="Bataille E."/>
            <person name="Bluet E."/>
            <person name="Bordelais I."/>
            <person name="Dubois M."/>
            <person name="Dumont C."/>
            <person name="Guerin T."/>
            <person name="Haffray S."/>
            <person name="Hammadi R."/>
            <person name="Muanga J."/>
            <person name="Pellouin V."/>
            <person name="Robert D."/>
            <person name="Wunderle E."/>
            <person name="Gauguet G."/>
            <person name="Roy A."/>
            <person name="Sainte-Marthe L."/>
            <person name="Verdier J."/>
            <person name="Verdier-Discala C."/>
            <person name="Hillier L.W."/>
            <person name="Fulton L."/>
            <person name="McPherson J."/>
            <person name="Matsuda F."/>
            <person name="Wilson R."/>
            <person name="Scarpelli C."/>
            <person name="Gyapay G."/>
            <person name="Wincker P."/>
            <person name="Saurin W."/>
            <person name="Quetier F."/>
            <person name="Waterston R."/>
            <person name="Hood L."/>
            <person name="Weissenbach J."/>
        </authorList>
    </citation>
    <scope>NUCLEOTIDE SEQUENCE [LARGE SCALE GENOMIC DNA]</scope>
</reference>
<reference key="2">
    <citation type="submission" date="2005-07" db="EMBL/GenBank/DDBJ databases">
        <authorList>
            <person name="Mural R.J."/>
            <person name="Istrail S."/>
            <person name="Sutton G.G."/>
            <person name="Florea L."/>
            <person name="Halpern A.L."/>
            <person name="Mobarry C.M."/>
            <person name="Lippert R."/>
            <person name="Walenz B."/>
            <person name="Shatkay H."/>
            <person name="Dew I."/>
            <person name="Miller J.R."/>
            <person name="Flanigan M.J."/>
            <person name="Edwards N.J."/>
            <person name="Bolanos R."/>
            <person name="Fasulo D."/>
            <person name="Halldorsson B.V."/>
            <person name="Hannenhalli S."/>
            <person name="Turner R."/>
            <person name="Yooseph S."/>
            <person name="Lu F."/>
            <person name="Nusskern D.R."/>
            <person name="Shue B.C."/>
            <person name="Zheng X.H."/>
            <person name="Zhong F."/>
            <person name="Delcher A.L."/>
            <person name="Huson D.H."/>
            <person name="Kravitz S.A."/>
            <person name="Mouchard L."/>
            <person name="Reinert K."/>
            <person name="Remington K.A."/>
            <person name="Clark A.G."/>
            <person name="Waterman M.S."/>
            <person name="Eichler E.E."/>
            <person name="Adams M.D."/>
            <person name="Hunkapiller M.W."/>
            <person name="Myers E.W."/>
            <person name="Venter J.C."/>
        </authorList>
    </citation>
    <scope>NUCLEOTIDE SEQUENCE [LARGE SCALE GENOMIC DNA]</scope>
</reference>
<reference key="3">
    <citation type="journal article" date="2004" name="Genome Res.">
        <title>The status, quality, and expansion of the NIH full-length cDNA project: the Mammalian Gene Collection (MGC).</title>
        <authorList>
            <consortium name="The MGC Project Team"/>
        </authorList>
    </citation>
    <scope>NUCLEOTIDE SEQUENCE [LARGE SCALE MRNA] (ISOFORM 1)</scope>
    <scope>VARIANT ARG-344</scope>
    <source>
        <tissue>Ovary</tissue>
        <tissue>Testis</tissue>
    </source>
</reference>
<reference key="4">
    <citation type="submission" date="2003-02" db="EMBL/GenBank/DDBJ databases">
        <title>Full-length cDNA libraries and normalization.</title>
        <authorList>
            <person name="Li W.B."/>
            <person name="Gruber C."/>
            <person name="Jessee J."/>
            <person name="Polayes D."/>
        </authorList>
    </citation>
    <scope>NUCLEOTIDE SEQUENCE [LARGE SCALE MRNA] OF 1-64</scope>
    <source>
        <tissue>Fetal liver</tissue>
    </source>
</reference>
<reference key="5">
    <citation type="submission" date="1999-01" db="EMBL/GenBank/DDBJ databases">
        <authorList>
            <consortium name="The Cancer Genome Anatomy Project (CGAP) at the National Cancer Institute"/>
        </authorList>
    </citation>
    <scope>NUCLEOTIDE SEQUENCE [LARGE SCALE MRNA] OF 440-573 (ISOFORM 3)</scope>
    <source>
        <tissue>Kidney</tissue>
    </source>
</reference>
<protein>
    <recommendedName>
        <fullName>60 kDa lysophospholipase</fullName>
        <shortName>LysoLP</shortName>
        <ecNumber evidence="2">3.1.1.5</ecNumber>
    </recommendedName>
    <alternativeName>
        <fullName evidence="2">Lysophospholipase-transacylase</fullName>
    </alternativeName>
    <domain>
        <recommendedName>
            <fullName>L-asparaginase</fullName>
            <ecNumber evidence="2">3.5.1.1</ecNumber>
        </recommendedName>
        <alternativeName>
            <fullName>L-asparagine amidohydrolase</fullName>
        </alternativeName>
    </domain>
    <domain>
        <recommendedName>
            <fullName>1-alkyl-2-acetylglycerophosphocholine esterase</fullName>
            <ecNumber evidence="2">3.1.1.47</ecNumber>
        </recommendedName>
        <alternativeName>
            <fullName>Platelet-activating factor acetylhydrolase</fullName>
            <shortName>PAF acetylhydrolase</shortName>
        </alternativeName>
    </domain>
</protein>
<gene>
    <name type="primary">ASPG</name>
    <name type="synonym">C14orf76</name>
</gene>
<organism>
    <name type="scientific">Homo sapiens</name>
    <name type="common">Human</name>
    <dbReference type="NCBI Taxonomy" id="9606"/>
    <lineage>
        <taxon>Eukaryota</taxon>
        <taxon>Metazoa</taxon>
        <taxon>Chordata</taxon>
        <taxon>Craniata</taxon>
        <taxon>Vertebrata</taxon>
        <taxon>Euteleostomi</taxon>
        <taxon>Mammalia</taxon>
        <taxon>Eutheria</taxon>
        <taxon>Euarchontoglires</taxon>
        <taxon>Primates</taxon>
        <taxon>Haplorrhini</taxon>
        <taxon>Catarrhini</taxon>
        <taxon>Hominidae</taxon>
        <taxon>Homo</taxon>
    </lineage>
</organism>
<keyword id="KW-0012">Acyltransferase</keyword>
<keyword id="KW-0025">Alternative splicing</keyword>
<keyword id="KW-0040">ANK repeat</keyword>
<keyword id="KW-0378">Hydrolase</keyword>
<keyword id="KW-0442">Lipid degradation</keyword>
<keyword id="KW-0443">Lipid metabolism</keyword>
<keyword id="KW-1267">Proteomics identification</keyword>
<keyword id="KW-1185">Reference proteome</keyword>
<keyword id="KW-0677">Repeat</keyword>
<keyword id="KW-0808">Transferase</keyword>
<evidence type="ECO:0000250" key="1"/>
<evidence type="ECO:0000250" key="2">
    <source>
        <dbReference type="UniProtKB" id="O88202"/>
    </source>
</evidence>
<evidence type="ECO:0000255" key="3">
    <source>
        <dbReference type="PROSITE-ProRule" id="PRU01068"/>
    </source>
</evidence>
<evidence type="ECO:0000255" key="4">
    <source>
        <dbReference type="PROSITE-ProRule" id="PRU10100"/>
    </source>
</evidence>
<evidence type="ECO:0000269" key="5">
    <source>
    </source>
</evidence>
<evidence type="ECO:0000303" key="6">
    <source ref="5"/>
</evidence>
<evidence type="ECO:0000305" key="7"/>
<accession>Q86U10</accession>
<accession>B9EGQ2</accession>
<accession>Q8IV80</accession>